<dbReference type="EC" id="4.2.1.126" evidence="1"/>
<dbReference type="EMBL" id="AE017355">
    <property type="protein sequence ID" value="AAT62471.1"/>
    <property type="molecule type" value="Genomic_DNA"/>
</dbReference>
<dbReference type="RefSeq" id="WP_000892337.1">
    <property type="nucleotide sequence ID" value="NC_005957.1"/>
</dbReference>
<dbReference type="RefSeq" id="YP_035076.1">
    <property type="nucleotide sequence ID" value="NC_005957.1"/>
</dbReference>
<dbReference type="SMR" id="Q6HMZ5"/>
<dbReference type="KEGG" id="btk:BT9727_0732"/>
<dbReference type="PATRIC" id="fig|281309.8.peg.767"/>
<dbReference type="HOGENOM" id="CLU_049049_1_1_9"/>
<dbReference type="UniPathway" id="UPA00342"/>
<dbReference type="Proteomes" id="UP000001301">
    <property type="component" value="Chromosome"/>
</dbReference>
<dbReference type="GO" id="GO:0097367">
    <property type="term" value="F:carbohydrate derivative binding"/>
    <property type="evidence" value="ECO:0007669"/>
    <property type="project" value="InterPro"/>
</dbReference>
<dbReference type="GO" id="GO:0016835">
    <property type="term" value="F:carbon-oxygen lyase activity"/>
    <property type="evidence" value="ECO:0007669"/>
    <property type="project" value="UniProtKB-UniRule"/>
</dbReference>
<dbReference type="GO" id="GO:0016803">
    <property type="term" value="F:ether hydrolase activity"/>
    <property type="evidence" value="ECO:0007669"/>
    <property type="project" value="TreeGrafter"/>
</dbReference>
<dbReference type="GO" id="GO:0046348">
    <property type="term" value="P:amino sugar catabolic process"/>
    <property type="evidence" value="ECO:0007669"/>
    <property type="project" value="InterPro"/>
</dbReference>
<dbReference type="GO" id="GO:0097173">
    <property type="term" value="P:N-acetylmuramic acid catabolic process"/>
    <property type="evidence" value="ECO:0007669"/>
    <property type="project" value="UniProtKB-UniPathway"/>
</dbReference>
<dbReference type="GO" id="GO:0009254">
    <property type="term" value="P:peptidoglycan turnover"/>
    <property type="evidence" value="ECO:0007669"/>
    <property type="project" value="TreeGrafter"/>
</dbReference>
<dbReference type="CDD" id="cd05007">
    <property type="entry name" value="SIS_Etherase"/>
    <property type="match status" value="1"/>
</dbReference>
<dbReference type="FunFam" id="1.10.8.1080:FF:000001">
    <property type="entry name" value="N-acetylmuramic acid 6-phosphate etherase"/>
    <property type="match status" value="1"/>
</dbReference>
<dbReference type="FunFam" id="3.40.50.10490:FF:000014">
    <property type="entry name" value="N-acetylmuramic acid 6-phosphate etherase"/>
    <property type="match status" value="1"/>
</dbReference>
<dbReference type="Gene3D" id="1.10.8.1080">
    <property type="match status" value="1"/>
</dbReference>
<dbReference type="Gene3D" id="3.40.50.10490">
    <property type="entry name" value="Glucose-6-phosphate isomerase like protein, domain 1"/>
    <property type="match status" value="1"/>
</dbReference>
<dbReference type="HAMAP" id="MF_00068">
    <property type="entry name" value="MurQ"/>
    <property type="match status" value="1"/>
</dbReference>
<dbReference type="InterPro" id="IPR005488">
    <property type="entry name" value="Etherase_MurQ"/>
</dbReference>
<dbReference type="InterPro" id="IPR005486">
    <property type="entry name" value="Glucokinase_regulatory_CS"/>
</dbReference>
<dbReference type="InterPro" id="IPR040190">
    <property type="entry name" value="MURQ/GCKR"/>
</dbReference>
<dbReference type="InterPro" id="IPR001347">
    <property type="entry name" value="SIS_dom"/>
</dbReference>
<dbReference type="InterPro" id="IPR046348">
    <property type="entry name" value="SIS_dom_sf"/>
</dbReference>
<dbReference type="NCBIfam" id="TIGR00274">
    <property type="entry name" value="N-acetylmuramic acid 6-phosphate etherase"/>
    <property type="match status" value="1"/>
</dbReference>
<dbReference type="NCBIfam" id="NF003915">
    <property type="entry name" value="PRK05441.1"/>
    <property type="match status" value="1"/>
</dbReference>
<dbReference type="NCBIfam" id="NF009222">
    <property type="entry name" value="PRK12570.1"/>
    <property type="match status" value="1"/>
</dbReference>
<dbReference type="PANTHER" id="PTHR10088">
    <property type="entry name" value="GLUCOKINASE REGULATORY PROTEIN"/>
    <property type="match status" value="1"/>
</dbReference>
<dbReference type="PANTHER" id="PTHR10088:SF4">
    <property type="entry name" value="GLUCOKINASE REGULATORY PROTEIN"/>
    <property type="match status" value="1"/>
</dbReference>
<dbReference type="Pfam" id="PF22645">
    <property type="entry name" value="GKRP_SIS_N"/>
    <property type="match status" value="1"/>
</dbReference>
<dbReference type="SUPFAM" id="SSF53697">
    <property type="entry name" value="SIS domain"/>
    <property type="match status" value="1"/>
</dbReference>
<dbReference type="PROSITE" id="PS01272">
    <property type="entry name" value="GCKR"/>
    <property type="match status" value="1"/>
</dbReference>
<dbReference type="PROSITE" id="PS51464">
    <property type="entry name" value="SIS"/>
    <property type="match status" value="1"/>
</dbReference>
<accession>Q6HMZ5</accession>
<feature type="chain" id="PRO_0000249611" description="N-acetylmuramic acid 6-phosphate etherase">
    <location>
        <begin position="1"/>
        <end position="294"/>
    </location>
</feature>
<feature type="domain" description="SIS" evidence="1">
    <location>
        <begin position="54"/>
        <end position="217"/>
    </location>
</feature>
<feature type="active site" description="Proton donor" evidence="1">
    <location>
        <position position="82"/>
    </location>
</feature>
<feature type="active site" evidence="1">
    <location>
        <position position="113"/>
    </location>
</feature>
<keyword id="KW-0119">Carbohydrate metabolism</keyword>
<keyword id="KW-0456">Lyase</keyword>
<comment type="function">
    <text evidence="1">Specifically catalyzes the cleavage of the D-lactyl ether substituent of MurNAc 6-phosphate, producing GlcNAc 6-phosphate and D-lactate.</text>
</comment>
<comment type="catalytic activity">
    <reaction evidence="1">
        <text>N-acetyl-D-muramate 6-phosphate + H2O = N-acetyl-D-glucosamine 6-phosphate + (R)-lactate</text>
        <dbReference type="Rhea" id="RHEA:26410"/>
        <dbReference type="ChEBI" id="CHEBI:15377"/>
        <dbReference type="ChEBI" id="CHEBI:16004"/>
        <dbReference type="ChEBI" id="CHEBI:57513"/>
        <dbReference type="ChEBI" id="CHEBI:58722"/>
        <dbReference type="EC" id="4.2.1.126"/>
    </reaction>
</comment>
<comment type="pathway">
    <text evidence="1">Amino-sugar metabolism; N-acetylmuramate degradation.</text>
</comment>
<comment type="subunit">
    <text evidence="1">Homodimer.</text>
</comment>
<comment type="miscellaneous">
    <text evidence="1">A lyase-type mechanism (elimination/hydration) is suggested for the cleavage of the lactyl ether bond of MurNAc 6-phosphate, with the formation of an alpha,beta-unsaturated aldehyde intermediate with (E)-stereochemistry, followed by the syn addition of water to give product.</text>
</comment>
<comment type="similarity">
    <text evidence="1">Belongs to the GCKR-like family. MurNAc-6-P etherase subfamily.</text>
</comment>
<gene>
    <name evidence="1" type="primary">murQ</name>
    <name type="ordered locus">BT9727_0732</name>
</gene>
<protein>
    <recommendedName>
        <fullName evidence="1">N-acetylmuramic acid 6-phosphate etherase</fullName>
        <shortName evidence="1">MurNAc-6-P etherase</shortName>
        <ecNumber evidence="1">4.2.1.126</ecNumber>
    </recommendedName>
    <alternativeName>
        <fullName evidence="1">N-acetylmuramic acid 6-phosphate hydrolase</fullName>
    </alternativeName>
    <alternativeName>
        <fullName evidence="1">N-acetylmuramic acid 6-phosphate lyase</fullName>
    </alternativeName>
</protein>
<sequence>MLENLSTEHRNEKTMNLDEMSIKEVLQSMNEEDRTVALAVEKEIEHIEKVVRVVIQSFEEEGRLIYIGAGTSGRLGILDAVECPPTFGTDDKMVQGFIAGGLKAFTKAVEGAEDREELAEEDLKSIGLNEKDTVIGIAASGRTPYVIGGLKYAHSVGASTASISCNKNAEISKYAKLNVEVETGAEILTGSTRLKAGTAQKLVLNMISTASMIGVGKVYKNLMVDVQSTNEKLVERSKRIIVEATGVSYEVAAEHYEKAERNVKAAIVMVLLQCEYGEALEKLKVAKGFVKKAL</sequence>
<proteinExistence type="inferred from homology"/>
<name>MURQ_BACHK</name>
<reference key="1">
    <citation type="journal article" date="2006" name="J. Bacteriol.">
        <title>Pathogenomic sequence analysis of Bacillus cereus and Bacillus thuringiensis isolates closely related to Bacillus anthracis.</title>
        <authorList>
            <person name="Han C.S."/>
            <person name="Xie G."/>
            <person name="Challacombe J.F."/>
            <person name="Altherr M.R."/>
            <person name="Bhotika S.S."/>
            <person name="Bruce D."/>
            <person name="Campbell C.S."/>
            <person name="Campbell M.L."/>
            <person name="Chen J."/>
            <person name="Chertkov O."/>
            <person name="Cleland C."/>
            <person name="Dimitrijevic M."/>
            <person name="Doggett N.A."/>
            <person name="Fawcett J.J."/>
            <person name="Glavina T."/>
            <person name="Goodwin L.A."/>
            <person name="Hill K.K."/>
            <person name="Hitchcock P."/>
            <person name="Jackson P.J."/>
            <person name="Keim P."/>
            <person name="Kewalramani A.R."/>
            <person name="Longmire J."/>
            <person name="Lucas S."/>
            <person name="Malfatti S."/>
            <person name="McMurry K."/>
            <person name="Meincke L.J."/>
            <person name="Misra M."/>
            <person name="Moseman B.L."/>
            <person name="Mundt M."/>
            <person name="Munk A.C."/>
            <person name="Okinaka R.T."/>
            <person name="Parson-Quintana B."/>
            <person name="Reilly L.P."/>
            <person name="Richardson P."/>
            <person name="Robinson D.L."/>
            <person name="Rubin E."/>
            <person name="Saunders E."/>
            <person name="Tapia R."/>
            <person name="Tesmer J.G."/>
            <person name="Thayer N."/>
            <person name="Thompson L.S."/>
            <person name="Tice H."/>
            <person name="Ticknor L.O."/>
            <person name="Wills P.L."/>
            <person name="Brettin T.S."/>
            <person name="Gilna P."/>
        </authorList>
    </citation>
    <scope>NUCLEOTIDE SEQUENCE [LARGE SCALE GENOMIC DNA]</scope>
    <source>
        <strain>97-27</strain>
    </source>
</reference>
<organism>
    <name type="scientific">Bacillus thuringiensis subsp. konkukian (strain 97-27)</name>
    <dbReference type="NCBI Taxonomy" id="281309"/>
    <lineage>
        <taxon>Bacteria</taxon>
        <taxon>Bacillati</taxon>
        <taxon>Bacillota</taxon>
        <taxon>Bacilli</taxon>
        <taxon>Bacillales</taxon>
        <taxon>Bacillaceae</taxon>
        <taxon>Bacillus</taxon>
        <taxon>Bacillus cereus group</taxon>
    </lineage>
</organism>
<evidence type="ECO:0000255" key="1">
    <source>
        <dbReference type="HAMAP-Rule" id="MF_00068"/>
    </source>
</evidence>